<organism>
    <name type="scientific">Picosynechococcus sp. (strain ATCC 27264 / PCC 7002 / PR-6)</name>
    <name type="common">Agmenellum quadruplicatum</name>
    <dbReference type="NCBI Taxonomy" id="32049"/>
    <lineage>
        <taxon>Bacteria</taxon>
        <taxon>Bacillati</taxon>
        <taxon>Cyanobacteriota</taxon>
        <taxon>Cyanophyceae</taxon>
        <taxon>Oscillatoriophycideae</taxon>
        <taxon>Chroococcales</taxon>
        <taxon>Geminocystaceae</taxon>
        <taxon>Picosynechococcus</taxon>
    </lineage>
</organism>
<gene>
    <name evidence="1" type="primary">psbJ</name>
    <name type="ordered locus">SYNPCC7002_A0233</name>
</gene>
<evidence type="ECO:0000255" key="1">
    <source>
        <dbReference type="HAMAP-Rule" id="MF_01305"/>
    </source>
</evidence>
<protein>
    <recommendedName>
        <fullName evidence="1">Photosystem II reaction center protein J</fullName>
        <shortName evidence="1">PSII-J</shortName>
    </recommendedName>
</protein>
<name>PSBJ_PICP2</name>
<sequence length="39" mass="3858">MSEGGKIPLWIVAVVAGMGVIAVVGIFFYGAYAGVGSAV</sequence>
<dbReference type="EMBL" id="AY075046">
    <property type="protein sequence ID" value="AAL78087.1"/>
    <property type="molecule type" value="Genomic_DNA"/>
</dbReference>
<dbReference type="EMBL" id="CP000951">
    <property type="protein sequence ID" value="ACA98245.1"/>
    <property type="molecule type" value="Genomic_DNA"/>
</dbReference>
<dbReference type="RefSeq" id="WP_012305869.1">
    <property type="nucleotide sequence ID" value="NZ_JAHHPU010000004.1"/>
</dbReference>
<dbReference type="SMR" id="Q8RSW0"/>
<dbReference type="STRING" id="32049.SYNPCC7002_A0233"/>
<dbReference type="KEGG" id="syp:SYNPCC7002_A0233"/>
<dbReference type="eggNOG" id="ENOG5033ABP">
    <property type="taxonomic scope" value="Bacteria"/>
</dbReference>
<dbReference type="HOGENOM" id="CLU_215151_0_0_3"/>
<dbReference type="Proteomes" id="UP000001688">
    <property type="component" value="Chromosome"/>
</dbReference>
<dbReference type="GO" id="GO:0009539">
    <property type="term" value="C:photosystem II reaction center"/>
    <property type="evidence" value="ECO:0007669"/>
    <property type="project" value="InterPro"/>
</dbReference>
<dbReference type="GO" id="GO:0031676">
    <property type="term" value="C:plasma membrane-derived thylakoid membrane"/>
    <property type="evidence" value="ECO:0007669"/>
    <property type="project" value="UniProtKB-SubCell"/>
</dbReference>
<dbReference type="GO" id="GO:0015979">
    <property type="term" value="P:photosynthesis"/>
    <property type="evidence" value="ECO:0007669"/>
    <property type="project" value="UniProtKB-UniRule"/>
</dbReference>
<dbReference type="Gene3D" id="6.10.250.2070">
    <property type="match status" value="1"/>
</dbReference>
<dbReference type="HAMAP" id="MF_01305">
    <property type="entry name" value="PSII_PsbJ"/>
    <property type="match status" value="1"/>
</dbReference>
<dbReference type="InterPro" id="IPR002682">
    <property type="entry name" value="PSII_PsbJ"/>
</dbReference>
<dbReference type="InterPro" id="IPR037267">
    <property type="entry name" value="PSII_PsbJ_sf"/>
</dbReference>
<dbReference type="NCBIfam" id="NF002722">
    <property type="entry name" value="PRK02565.1"/>
    <property type="match status" value="1"/>
</dbReference>
<dbReference type="PANTHER" id="PTHR34812">
    <property type="entry name" value="PHOTOSYSTEM II REACTION CENTER PROTEIN J"/>
    <property type="match status" value="1"/>
</dbReference>
<dbReference type="PANTHER" id="PTHR34812:SF3">
    <property type="entry name" value="PHOTOSYSTEM II REACTION CENTER PROTEIN J"/>
    <property type="match status" value="1"/>
</dbReference>
<dbReference type="Pfam" id="PF01788">
    <property type="entry name" value="PsbJ"/>
    <property type="match status" value="1"/>
</dbReference>
<dbReference type="SUPFAM" id="SSF161021">
    <property type="entry name" value="Photosystem II reaction center protein J, PsbJ"/>
    <property type="match status" value="1"/>
</dbReference>
<reference key="1">
    <citation type="journal article" date="2002" name="J. Biol. Chem.">
        <title>Assembly of photosystem I. I. Inactivation of the rubA gene encoding a membrane-associated rubredoxin in the cyanobacterium Synechococcus sp. PCC 7002 causes a loss of photosystem I activity.</title>
        <authorList>
            <person name="Shen G."/>
            <person name="Zhao J."/>
            <person name="Reimer S.K."/>
            <person name="Antonkine M.L."/>
            <person name="Cai Q."/>
            <person name="Weiland S.M."/>
            <person name="Golbeck J.H."/>
            <person name="Bryant D.A."/>
        </authorList>
    </citation>
    <scope>NUCLEOTIDE SEQUENCE [GENOMIC DNA]</scope>
</reference>
<reference key="2">
    <citation type="submission" date="2008-02" db="EMBL/GenBank/DDBJ databases">
        <title>Complete sequence of Synechococcus sp. PCC 7002.</title>
        <authorList>
            <person name="Li T."/>
            <person name="Zhao J."/>
            <person name="Zhao C."/>
            <person name="Liu Z."/>
            <person name="Zhao F."/>
            <person name="Marquardt J."/>
            <person name="Nomura C.T."/>
            <person name="Persson S."/>
            <person name="Detter J.C."/>
            <person name="Richardson P.M."/>
            <person name="Lanz C."/>
            <person name="Schuster S.C."/>
            <person name="Wang J."/>
            <person name="Li S."/>
            <person name="Huang X."/>
            <person name="Cai T."/>
            <person name="Yu Z."/>
            <person name="Luo J."/>
            <person name="Zhao J."/>
            <person name="Bryant D.A."/>
        </authorList>
    </citation>
    <scope>NUCLEOTIDE SEQUENCE [LARGE SCALE GENOMIC DNA]</scope>
    <source>
        <strain>ATCC 27264 / PCC 7002 / PR-6</strain>
    </source>
</reference>
<feature type="chain" id="PRO_0000216624" description="Photosystem II reaction center protein J">
    <location>
        <begin position="1"/>
        <end position="39"/>
    </location>
</feature>
<feature type="transmembrane region" description="Helical" evidence="1">
    <location>
        <begin position="7"/>
        <end position="27"/>
    </location>
</feature>
<keyword id="KW-0472">Membrane</keyword>
<keyword id="KW-0602">Photosynthesis</keyword>
<keyword id="KW-0604">Photosystem II</keyword>
<keyword id="KW-0674">Reaction center</keyword>
<keyword id="KW-1185">Reference proteome</keyword>
<keyword id="KW-0793">Thylakoid</keyword>
<keyword id="KW-0812">Transmembrane</keyword>
<keyword id="KW-1133">Transmembrane helix</keyword>
<comment type="function">
    <text>This protein is a component of the reaction center of photosystem II.</text>
</comment>
<comment type="function">
    <text evidence="1">One of the components of the core complex of photosystem II (PSII). PSII is a light-driven water:plastoquinone oxidoreductase that uses light energy to abstract electrons from H(2)O, generating O(2) and a proton gradient subsequently used for ATP formation. It consists of a core antenna complex that captures photons, and an electron transfer chain that converts photonic excitation into a charge separation.</text>
</comment>
<comment type="subunit">
    <text evidence="1">PSII is composed of 1 copy each of membrane proteins PsbA, PsbB, PsbC, PsbD, PsbE, PsbF, PsbH, PsbI, PsbJ, PsbK, PsbL, PsbM, PsbT, PsbX, PsbY, PsbZ, Psb30/Ycf12, peripheral proteins PsbO, CyanoQ (PsbQ), PsbU, PsbV and a large number of cofactors. It forms dimeric complexes.</text>
</comment>
<comment type="subcellular location">
    <subcellularLocation>
        <location evidence="1">Cellular thylakoid membrane</location>
        <topology evidence="1">Single-pass membrane protein</topology>
    </subcellularLocation>
</comment>
<comment type="similarity">
    <text evidence="1">Belongs to the PsbJ family.</text>
</comment>
<accession>Q8RSW0</accession>
<accession>B1XMQ8</accession>
<proteinExistence type="inferred from homology"/>